<sequence>MNWLKTTLQIYPEIAVFLSLAIGYWVGNKTFKGFSLGAVTATLLAAVVIGQFDITLSSNVKSIFFLMFLFAVGYGIGPQFVQGIAKDGLPQALFAVVACLFSLLFPILCAKIAGYDLGATAGFFAGTQTISASMGLATDAIVHLDLPAEESKKMFSVIPVAYAVTYIFGTVGSAIVLAQIIPKLLRIDLEAACKDYMAKNGGTTENARGEWHTYALRSYKLTEKNRAVGMTIHEFEAQFPHRKVFVEGLRHEGKVIDTDPNSKLSTGDIIAVGGEYDAFVEFFDHPDSFDETQDSELLNQPVLGVDVYVTSRGINGKTLAELGKTTSSHGIFLRKIKRGPKAIEIPILPQTRLFRGDILTLSGLTKDVERVTKQLGVIDQRGNSMDVAFWAFAIVIGALLGSLVFKIGNLPLTLSTAGGVLIAGLIFSWVRSFHPTFGWVPEPTVWFMNSVGLNVFIAAIGISAGPNFVAGLKELGFSLFLWGVVATTLPLFFAALVGKYVFKFHPAILLGCCAGARTTTASLGMINEKAKSNIPSLGYTITYAVGNTLLTMWGLVLILILT</sequence>
<evidence type="ECO:0000255" key="1"/>
<evidence type="ECO:0000255" key="2">
    <source>
        <dbReference type="PROSITE-ProRule" id="PRU00544"/>
    </source>
</evidence>
<evidence type="ECO:0000305" key="3"/>
<reference key="1">
    <citation type="journal article" date="2002" name="Nat. Biotechnol.">
        <title>Genome sequence of the dissimilatory metal ion-reducing bacterium Shewanella oneidensis.</title>
        <authorList>
            <person name="Heidelberg J.F."/>
            <person name="Paulsen I.T."/>
            <person name="Nelson K.E."/>
            <person name="Gaidos E.J."/>
            <person name="Nelson W.C."/>
            <person name="Read T.D."/>
            <person name="Eisen J.A."/>
            <person name="Seshadri R."/>
            <person name="Ward N.L."/>
            <person name="Methe B.A."/>
            <person name="Clayton R.A."/>
            <person name="Meyer T."/>
            <person name="Tsapin A."/>
            <person name="Scott J."/>
            <person name="Beanan M.J."/>
            <person name="Brinkac L.M."/>
            <person name="Daugherty S.C."/>
            <person name="DeBoy R.T."/>
            <person name="Dodson R.J."/>
            <person name="Durkin A.S."/>
            <person name="Haft D.H."/>
            <person name="Kolonay J.F."/>
            <person name="Madupu R."/>
            <person name="Peterson J.D."/>
            <person name="Umayam L.A."/>
            <person name="White O."/>
            <person name="Wolf A.M."/>
            <person name="Vamathevan J.J."/>
            <person name="Weidman J.F."/>
            <person name="Impraim M."/>
            <person name="Lee K."/>
            <person name="Berry K.J."/>
            <person name="Lee C."/>
            <person name="Mueller J."/>
            <person name="Khouri H.M."/>
            <person name="Gill J."/>
            <person name="Utterback T.R."/>
            <person name="McDonald L.A."/>
            <person name="Feldblyum T.V."/>
            <person name="Smith H.O."/>
            <person name="Venter J.C."/>
            <person name="Nealson K.H."/>
            <person name="Fraser C.M."/>
        </authorList>
    </citation>
    <scope>NUCLEOTIDE SEQUENCE [LARGE SCALE GENOMIC DNA]</scope>
    <source>
        <strain>ATCC 700550 / JCM 31522 / CIP 106686 / LMG 19005 / NCIMB 14063 / MR-1</strain>
    </source>
</reference>
<name>Y2143_SHEON</name>
<accession>Q8EF50</accession>
<proteinExistence type="inferred from homology"/>
<dbReference type="EMBL" id="AE014299">
    <property type="protein sequence ID" value="AAN55188.1"/>
    <property type="molecule type" value="Genomic_DNA"/>
</dbReference>
<dbReference type="RefSeq" id="NP_717744.1">
    <property type="nucleotide sequence ID" value="NC_004347.2"/>
</dbReference>
<dbReference type="RefSeq" id="WP_011072196.1">
    <property type="nucleotide sequence ID" value="NC_004347.2"/>
</dbReference>
<dbReference type="SMR" id="Q8EF50"/>
<dbReference type="STRING" id="211586.SO_2143"/>
<dbReference type="PaxDb" id="211586-SO_2143"/>
<dbReference type="KEGG" id="son:SO_2143"/>
<dbReference type="PATRIC" id="fig|211586.12.peg.2058"/>
<dbReference type="eggNOG" id="COG2985">
    <property type="taxonomic scope" value="Bacteria"/>
</dbReference>
<dbReference type="HOGENOM" id="CLU_035023_2_2_6"/>
<dbReference type="OrthoDB" id="5166626at2"/>
<dbReference type="PhylomeDB" id="Q8EF50"/>
<dbReference type="BioCyc" id="SONE211586:G1GMP-1970-MONOMER"/>
<dbReference type="Proteomes" id="UP000008186">
    <property type="component" value="Chromosome"/>
</dbReference>
<dbReference type="GO" id="GO:0005886">
    <property type="term" value="C:plasma membrane"/>
    <property type="evidence" value="ECO:0000318"/>
    <property type="project" value="GO_Central"/>
</dbReference>
<dbReference type="GO" id="GO:0008324">
    <property type="term" value="F:monoatomic cation transmembrane transporter activity"/>
    <property type="evidence" value="ECO:0007669"/>
    <property type="project" value="InterPro"/>
</dbReference>
<dbReference type="GO" id="GO:0006813">
    <property type="term" value="P:potassium ion transport"/>
    <property type="evidence" value="ECO:0007669"/>
    <property type="project" value="InterPro"/>
</dbReference>
<dbReference type="Gene3D" id="3.30.70.1450">
    <property type="entry name" value="Regulator of K+ conductance, C-terminal domain"/>
    <property type="match status" value="1"/>
</dbReference>
<dbReference type="InterPro" id="IPR050144">
    <property type="entry name" value="AAE_transporter"/>
</dbReference>
<dbReference type="InterPro" id="IPR022457">
    <property type="entry name" value="Asp_Ala_antiprt"/>
</dbReference>
<dbReference type="InterPro" id="IPR006037">
    <property type="entry name" value="RCK_C"/>
</dbReference>
<dbReference type="InterPro" id="IPR036721">
    <property type="entry name" value="RCK_C_sf"/>
</dbReference>
<dbReference type="InterPro" id="IPR006512">
    <property type="entry name" value="YidE_YbjL"/>
</dbReference>
<dbReference type="NCBIfam" id="TIGR03802">
    <property type="entry name" value="Asp_Ala_antiprt"/>
    <property type="match status" value="1"/>
</dbReference>
<dbReference type="NCBIfam" id="TIGR01625">
    <property type="entry name" value="YidE_YbjL_dupl"/>
    <property type="match status" value="1"/>
</dbReference>
<dbReference type="PANTHER" id="PTHR30445:SF9">
    <property type="match status" value="1"/>
</dbReference>
<dbReference type="PANTHER" id="PTHR30445">
    <property type="entry name" value="K(+)_H(+) ANTIPORTER SUBUNIT KHTT"/>
    <property type="match status" value="1"/>
</dbReference>
<dbReference type="Pfam" id="PF06826">
    <property type="entry name" value="Asp-Al_Ex"/>
    <property type="match status" value="2"/>
</dbReference>
<dbReference type="SUPFAM" id="SSF116726">
    <property type="entry name" value="TrkA C-terminal domain-like"/>
    <property type="match status" value="2"/>
</dbReference>
<dbReference type="PROSITE" id="PS51202">
    <property type="entry name" value="RCK_C"/>
    <property type="match status" value="2"/>
</dbReference>
<feature type="chain" id="PRO_0000208779" description="Uncharacterized transporter SO_2143">
    <location>
        <begin position="1"/>
        <end position="562"/>
    </location>
</feature>
<feature type="transmembrane region" description="Helical" evidence="1">
    <location>
        <begin position="10"/>
        <end position="27"/>
    </location>
</feature>
<feature type="transmembrane region" description="Helical" evidence="1">
    <location>
        <begin position="34"/>
        <end position="53"/>
    </location>
</feature>
<feature type="transmembrane region" description="Helical" evidence="1">
    <location>
        <begin position="63"/>
        <end position="85"/>
    </location>
</feature>
<feature type="transmembrane region" description="Helical" evidence="1">
    <location>
        <begin position="92"/>
        <end position="114"/>
    </location>
</feature>
<feature type="transmembrane region" description="Helical" evidence="1">
    <location>
        <begin position="155"/>
        <end position="177"/>
    </location>
</feature>
<feature type="transmembrane region" description="Helical" evidence="1">
    <location>
        <begin position="387"/>
        <end position="404"/>
    </location>
</feature>
<feature type="transmembrane region" description="Helical" evidence="1">
    <location>
        <begin position="408"/>
        <end position="430"/>
    </location>
</feature>
<feature type="transmembrane region" description="Helical" evidence="1">
    <location>
        <begin position="443"/>
        <end position="465"/>
    </location>
</feature>
<feature type="transmembrane region" description="Helical" evidence="1">
    <location>
        <begin position="475"/>
        <end position="497"/>
    </location>
</feature>
<feature type="transmembrane region" description="Helical" evidence="1">
    <location>
        <begin position="504"/>
        <end position="526"/>
    </location>
</feature>
<feature type="transmembrane region" description="Helical" evidence="1">
    <location>
        <begin position="539"/>
        <end position="561"/>
    </location>
</feature>
<feature type="domain" description="RCK C-terminal 1" evidence="2">
    <location>
        <begin position="204"/>
        <end position="288"/>
    </location>
</feature>
<feature type="domain" description="RCK C-terminal 2" evidence="2">
    <location>
        <begin position="290"/>
        <end position="377"/>
    </location>
</feature>
<gene>
    <name type="ordered locus">SO_2143</name>
</gene>
<comment type="subcellular location">
    <subcellularLocation>
        <location evidence="3">Cell membrane</location>
        <topology evidence="3">Multi-pass membrane protein</topology>
    </subcellularLocation>
</comment>
<comment type="similarity">
    <text evidence="3">Belongs to the AAE transporter (TC 2.A.81) family.</text>
</comment>
<keyword id="KW-1003">Cell membrane</keyword>
<keyword id="KW-0472">Membrane</keyword>
<keyword id="KW-1185">Reference proteome</keyword>
<keyword id="KW-0677">Repeat</keyword>
<keyword id="KW-0812">Transmembrane</keyword>
<keyword id="KW-1133">Transmembrane helix</keyword>
<keyword id="KW-0813">Transport</keyword>
<organism>
    <name type="scientific">Shewanella oneidensis (strain ATCC 700550 / JCM 31522 / CIP 106686 / LMG 19005 / NCIMB 14063 / MR-1)</name>
    <dbReference type="NCBI Taxonomy" id="211586"/>
    <lineage>
        <taxon>Bacteria</taxon>
        <taxon>Pseudomonadati</taxon>
        <taxon>Pseudomonadota</taxon>
        <taxon>Gammaproteobacteria</taxon>
        <taxon>Alteromonadales</taxon>
        <taxon>Shewanellaceae</taxon>
        <taxon>Shewanella</taxon>
    </lineage>
</organism>
<protein>
    <recommendedName>
        <fullName>Uncharacterized transporter SO_2143</fullName>
    </recommendedName>
</protein>